<feature type="chain" id="PRO_0000378367" description="Structural polyprotein">
    <location>
        <begin position="1"/>
        <end position="1012"/>
    </location>
</feature>
<feature type="chain" id="PRO_0000378368" description="Precursor of VP2">
    <location>
        <begin position="1"/>
        <end position="512"/>
    </location>
</feature>
<feature type="chain" id="PRO_0000378369" description="Capsid protein VP2">
    <location>
        <begin position="1"/>
        <end position="441"/>
    </location>
</feature>
<feature type="peptide" id="PRO_0000378370" description="Structural peptide 1" evidence="1">
    <location>
        <begin position="442"/>
        <end position="487"/>
    </location>
</feature>
<feature type="peptide" id="PRO_0000378371" description="Structural peptide 2" evidence="1">
    <location>
        <begin position="488"/>
        <end position="494"/>
    </location>
</feature>
<feature type="peptide" id="PRO_0000378372" description="Structural peptide 3" evidence="1">
    <location>
        <begin position="495"/>
        <end position="501"/>
    </location>
</feature>
<feature type="peptide" id="PRO_0000378373" description="Structural peptide 4" evidence="1">
    <location>
        <begin position="502"/>
        <end position="512"/>
    </location>
</feature>
<feature type="chain" id="PRO_0000378374" description="Protease VP4">
    <location>
        <begin position="513"/>
        <end position="755"/>
    </location>
</feature>
<feature type="chain" id="PRO_0000378375" description="Capsid protein VP3">
    <location>
        <begin position="756"/>
        <end position="1012"/>
    </location>
</feature>
<feature type="domain" description="Peptidase S50" evidence="2">
    <location>
        <begin position="513"/>
        <end position="755"/>
    </location>
</feature>
<feature type="region of interest" description="Disordered" evidence="3">
    <location>
        <begin position="970"/>
        <end position="1012"/>
    </location>
</feature>
<feature type="region of interest" description="Interaction with VP1 protein" evidence="1">
    <location>
        <begin position="1003"/>
        <end position="1012"/>
    </location>
</feature>
<feature type="compositionally biased region" description="Basic residues" evidence="3">
    <location>
        <begin position="975"/>
        <end position="986"/>
    </location>
</feature>
<feature type="active site" description="Nucleophile" evidence="2">
    <location>
        <position position="652"/>
    </location>
</feature>
<feature type="active site" evidence="2">
    <location>
        <position position="692"/>
    </location>
</feature>
<feature type="binding site" evidence="1">
    <location>
        <position position="30"/>
    </location>
    <ligand>
        <name>a divalent metal cation</name>
        <dbReference type="ChEBI" id="CHEBI:60240"/>
        <note>ligand shared between trimeric partners</note>
    </ligand>
</feature>
<feature type="site" description="Cleavage; by protease VP4" evidence="1">
    <location>
        <begin position="441"/>
        <end position="442"/>
    </location>
</feature>
<feature type="site" description="Cleavage; by protease VP4" evidence="1">
    <location>
        <begin position="487"/>
        <end position="488"/>
    </location>
</feature>
<feature type="site" description="Cleavage; by protease VP4" evidence="1">
    <location>
        <begin position="494"/>
        <end position="495"/>
    </location>
</feature>
<feature type="site" description="Cleavage; by protease VP4" evidence="1">
    <location>
        <begin position="501"/>
        <end position="502"/>
    </location>
</feature>
<feature type="site" description="Cleavage; by protease VP4" evidence="1">
    <location>
        <begin position="512"/>
        <end position="513"/>
    </location>
</feature>
<feature type="site" description="Cleavage; by protease VP4" evidence="1">
    <location>
        <begin position="755"/>
        <end position="756"/>
    </location>
</feature>
<feature type="helix" evidence="6">
    <location>
        <begin position="13"/>
        <end position="19"/>
    </location>
</feature>
<feature type="strand" evidence="6">
    <location>
        <begin position="36"/>
        <end position="45"/>
    </location>
</feature>
<feature type="strand" evidence="6">
    <location>
        <begin position="51"/>
        <end position="53"/>
    </location>
</feature>
<feature type="strand" evidence="6">
    <location>
        <begin position="55"/>
        <end position="59"/>
    </location>
</feature>
<feature type="strand" evidence="6">
    <location>
        <begin position="64"/>
        <end position="74"/>
    </location>
</feature>
<feature type="strand" evidence="6">
    <location>
        <begin position="76"/>
        <end position="78"/>
    </location>
</feature>
<feature type="strand" evidence="6">
    <location>
        <begin position="80"/>
        <end position="87"/>
    </location>
</feature>
<feature type="helix" evidence="6">
    <location>
        <begin position="92"/>
        <end position="94"/>
    </location>
</feature>
<feature type="strand" evidence="6">
    <location>
        <begin position="96"/>
        <end position="99"/>
    </location>
</feature>
<feature type="strand" evidence="6">
    <location>
        <begin position="101"/>
        <end position="108"/>
    </location>
</feature>
<feature type="strand" evidence="6">
    <location>
        <begin position="115"/>
        <end position="118"/>
    </location>
</feature>
<feature type="strand" evidence="6">
    <location>
        <begin position="123"/>
        <end position="131"/>
    </location>
</feature>
<feature type="helix" evidence="6">
    <location>
        <begin position="133"/>
        <end position="135"/>
    </location>
</feature>
<feature type="strand" evidence="6">
    <location>
        <begin position="154"/>
        <end position="159"/>
    </location>
</feature>
<feature type="turn" evidence="6">
    <location>
        <begin position="160"/>
        <end position="162"/>
    </location>
</feature>
<feature type="strand" evidence="6">
    <location>
        <begin position="164"/>
        <end position="167"/>
    </location>
</feature>
<feature type="strand" evidence="6">
    <location>
        <begin position="194"/>
        <end position="197"/>
    </location>
</feature>
<feature type="strand" evidence="6">
    <location>
        <begin position="204"/>
        <end position="209"/>
    </location>
</feature>
<feature type="strand" evidence="6">
    <location>
        <begin position="211"/>
        <end position="219"/>
    </location>
</feature>
<feature type="strand" evidence="6">
    <location>
        <begin position="225"/>
        <end position="232"/>
    </location>
</feature>
<feature type="strand" evidence="6">
    <location>
        <begin position="236"/>
        <end position="238"/>
    </location>
</feature>
<feature type="strand" evidence="6">
    <location>
        <begin position="240"/>
        <end position="250"/>
    </location>
</feature>
<feature type="strand" evidence="6">
    <location>
        <begin position="255"/>
        <end position="265"/>
    </location>
</feature>
<feature type="strand" evidence="6">
    <location>
        <begin position="270"/>
        <end position="281"/>
    </location>
</feature>
<feature type="strand" evidence="6">
    <location>
        <begin position="288"/>
        <end position="296"/>
    </location>
</feature>
<feature type="strand" evidence="6">
    <location>
        <begin position="305"/>
        <end position="318"/>
    </location>
</feature>
<feature type="strand" evidence="6">
    <location>
        <begin position="324"/>
        <end position="337"/>
    </location>
</feature>
<feature type="turn" evidence="6">
    <location>
        <begin position="338"/>
        <end position="341"/>
    </location>
</feature>
<feature type="turn" evidence="6">
    <location>
        <begin position="343"/>
        <end position="345"/>
    </location>
</feature>
<feature type="strand" evidence="6">
    <location>
        <begin position="349"/>
        <end position="356"/>
    </location>
</feature>
<feature type="strand" evidence="6">
    <location>
        <begin position="365"/>
        <end position="375"/>
    </location>
</feature>
<feature type="turn" evidence="6">
    <location>
        <begin position="377"/>
        <end position="381"/>
    </location>
</feature>
<feature type="helix" evidence="6">
    <location>
        <begin position="394"/>
        <end position="403"/>
    </location>
</feature>
<feature type="helix" evidence="6">
    <location>
        <begin position="405"/>
        <end position="408"/>
    </location>
</feature>
<feature type="strand" evidence="6">
    <location>
        <begin position="412"/>
        <end position="415"/>
    </location>
</feature>
<feature type="helix" evidence="6">
    <location>
        <begin position="416"/>
        <end position="426"/>
    </location>
</feature>
<evidence type="ECO:0000250" key="1"/>
<evidence type="ECO:0000255" key="2">
    <source>
        <dbReference type="PROSITE-ProRule" id="PRU00881"/>
    </source>
</evidence>
<evidence type="ECO:0000256" key="3">
    <source>
        <dbReference type="SAM" id="MobiDB-lite"/>
    </source>
</evidence>
<evidence type="ECO:0000269" key="4">
    <source>
    </source>
</evidence>
<evidence type="ECO:0000305" key="5"/>
<evidence type="ECO:0007829" key="6">
    <source>
        <dbReference type="PDB" id="7VRN"/>
    </source>
</evidence>
<protein>
    <recommendedName>
        <fullName>Structural polyprotein</fullName>
        <shortName>PP</shortName>
    </recommendedName>
    <component>
        <recommendedName>
            <fullName>Precursor of VP2</fullName>
            <shortName>Pre-VP2</shortName>
        </recommendedName>
    </component>
    <component>
        <recommendedName>
            <fullName>Capsid protein VP2</fullName>
        </recommendedName>
    </component>
    <component>
        <recommendedName>
            <fullName>Structural peptide 1</fullName>
            <shortName>p1</shortName>
        </recommendedName>
        <alternativeName>
            <fullName>pep46</fullName>
        </alternativeName>
    </component>
    <component>
        <recommendedName>
            <fullName>Structural peptide 2</fullName>
            <shortName>p2</shortName>
        </recommendedName>
        <alternativeName>
            <fullName>pep7a</fullName>
        </alternativeName>
    </component>
    <component>
        <recommendedName>
            <fullName>Structural peptide 3</fullName>
            <shortName>p3</shortName>
        </recommendedName>
        <alternativeName>
            <fullName>pep7b</fullName>
        </alternativeName>
    </component>
    <component>
        <recommendedName>
            <fullName>Structural peptide 4</fullName>
            <shortName>p4</shortName>
        </recommendedName>
        <alternativeName>
            <fullName>pep11</fullName>
        </alternativeName>
    </component>
    <component>
        <recommendedName>
            <fullName>Protease VP4</fullName>
            <ecNumber>3.4.21.-</ecNumber>
        </recommendedName>
        <alternativeName>
            <fullName>Non-structural protein VP4</fullName>
            <shortName>NS</shortName>
        </alternativeName>
    </component>
    <component>
        <recommendedName>
            <fullName>Capsid protein VP3</fullName>
        </recommendedName>
    </component>
</protein>
<name>POLS_IBDVB</name>
<proteinExistence type="evidence at protein level"/>
<organism>
    <name type="scientific">Avian infectious bursal disease virus (strain Chicken/Cuba/Soroa/1998)</name>
    <name type="common">IBDV</name>
    <name type="synonym">Gumboro disease virus</name>
    <dbReference type="NCBI Taxonomy" id="645118"/>
    <lineage>
        <taxon>Viruses</taxon>
        <taxon>Riboviria</taxon>
        <taxon>Orthornavirae</taxon>
        <taxon>Birnaviridae</taxon>
        <taxon>Avibirnavirus</taxon>
        <taxon>Avibirnavirus gumboroense</taxon>
    </lineage>
</organism>
<dbReference type="EC" id="3.4.21.-"/>
<dbReference type="EMBL" id="AF140705">
    <property type="protein sequence ID" value="AAD30136.1"/>
    <property type="molecule type" value="Genomic_RNA"/>
</dbReference>
<dbReference type="PIR" id="JC1327">
    <property type="entry name" value="JC1327"/>
</dbReference>
<dbReference type="PIR" id="JQ2198">
    <property type="entry name" value="JQ2198"/>
</dbReference>
<dbReference type="PDB" id="7VRN">
    <property type="method" value="EM"/>
    <property type="resolution" value="3.40 A"/>
    <property type="chains" value="A/B/C/D/E/F/G/H/I/J/K/L/M=1-441"/>
</dbReference>
<dbReference type="PDBsum" id="7VRN"/>
<dbReference type="SMR" id="Q9WI42"/>
<dbReference type="MEROPS" id="S50.002"/>
<dbReference type="Proteomes" id="UP000007429">
    <property type="component" value="Genome"/>
</dbReference>
<dbReference type="GO" id="GO:0030430">
    <property type="term" value="C:host cell cytoplasm"/>
    <property type="evidence" value="ECO:0007669"/>
    <property type="project" value="UniProtKB-SubCell"/>
</dbReference>
<dbReference type="GO" id="GO:0039621">
    <property type="term" value="C:T=13 icosahedral viral capsid"/>
    <property type="evidence" value="ECO:0007669"/>
    <property type="project" value="UniProtKB-KW"/>
</dbReference>
<dbReference type="GO" id="GO:0046872">
    <property type="term" value="F:metal ion binding"/>
    <property type="evidence" value="ECO:0007669"/>
    <property type="project" value="UniProtKB-KW"/>
</dbReference>
<dbReference type="GO" id="GO:0008236">
    <property type="term" value="F:serine-type peptidase activity"/>
    <property type="evidence" value="ECO:0007669"/>
    <property type="project" value="UniProtKB-KW"/>
</dbReference>
<dbReference type="GO" id="GO:0005198">
    <property type="term" value="F:structural molecule activity"/>
    <property type="evidence" value="ECO:0007669"/>
    <property type="project" value="InterPro"/>
</dbReference>
<dbReference type="GO" id="GO:0006508">
    <property type="term" value="P:proteolysis"/>
    <property type="evidence" value="ECO:0007669"/>
    <property type="project" value="UniProtKB-KW"/>
</dbReference>
<dbReference type="FunFam" id="2.60.120.660:FF:000001">
    <property type="entry name" value="Structural polyprotein"/>
    <property type="match status" value="1"/>
</dbReference>
<dbReference type="Gene3D" id="2.60.120.20">
    <property type="match status" value="1"/>
</dbReference>
<dbReference type="Gene3D" id="6.10.250.1030">
    <property type="match status" value="1"/>
</dbReference>
<dbReference type="Gene3D" id="1.10.8.880">
    <property type="entry name" value="Birnavirus VP3 protein, domain 2"/>
    <property type="match status" value="1"/>
</dbReference>
<dbReference type="Gene3D" id="1.10.150.620">
    <property type="entry name" value="Capsid protein VP3, domain 1"/>
    <property type="match status" value="1"/>
</dbReference>
<dbReference type="Gene3D" id="2.60.120.660">
    <property type="entry name" value="icosahedral virus"/>
    <property type="match status" value="1"/>
</dbReference>
<dbReference type="InterPro" id="IPR002662">
    <property type="entry name" value="Birna_VP2"/>
</dbReference>
<dbReference type="InterPro" id="IPR002663">
    <property type="entry name" value="Birna_VP3"/>
</dbReference>
<dbReference type="InterPro" id="IPR043048">
    <property type="entry name" value="Birna_VP3_dom1"/>
</dbReference>
<dbReference type="InterPro" id="IPR043049">
    <property type="entry name" value="Birna_VP3_dom2"/>
</dbReference>
<dbReference type="InterPro" id="IPR025775">
    <property type="entry name" value="Birna_VP4_Prtase_dom"/>
</dbReference>
<dbReference type="InterPro" id="IPR029053">
    <property type="entry name" value="Viral_coat"/>
</dbReference>
<dbReference type="Pfam" id="PF01766">
    <property type="entry name" value="Birna_VP2"/>
    <property type="match status" value="1"/>
</dbReference>
<dbReference type="Pfam" id="PF01767">
    <property type="entry name" value="Birna_VP3"/>
    <property type="match status" value="1"/>
</dbReference>
<dbReference type="Pfam" id="PF01768">
    <property type="entry name" value="Birna_VP4"/>
    <property type="match status" value="1"/>
</dbReference>
<dbReference type="SUPFAM" id="SSF88633">
    <property type="entry name" value="Positive stranded ssRNA viruses"/>
    <property type="match status" value="1"/>
</dbReference>
<dbReference type="PROSITE" id="PS51548">
    <property type="entry name" value="BIRNAVIRUS_VP4_PRO"/>
    <property type="match status" value="1"/>
</dbReference>
<reference key="1">
    <citation type="journal article" date="1998" name="J. Gen. Virol.">
        <title>Expression of ORF A1 of infectious bursal disease virus results in the formation of virus-like particles.</title>
        <authorList>
            <person name="Fernandez-Arias A."/>
            <person name="Risco C."/>
            <person name="Martinez S."/>
            <person name="Albar J.P."/>
            <person name="Rodriguez J.F."/>
        </authorList>
    </citation>
    <scope>NUCLEOTIDE SEQUENCE [GENOMIC RNA]</scope>
</reference>
<reference key="2">
    <citation type="journal article" date="1993" name="J. Gen. Virol.">
        <title>The genetic basis for the antigenicity of the VP2 protein of the infectious bursal disease virus.</title>
        <authorList>
            <person name="Schnitzler D."/>
            <person name="Bernstein F."/>
            <person name="Muller H."/>
            <person name="Becht H."/>
        </authorList>
    </citation>
    <scope>NUCLEOTIDE SEQUENCE [GENOMIC RNA]</scope>
</reference>
<reference key="3">
    <citation type="journal article" date="2001" name="J. Virol.">
        <title>C terminus of infectious bursal disease virus major capsid protein VP2 is involved in definition of the T number for capsid assembly.</title>
        <authorList>
            <person name="Caston J.R."/>
            <person name="Martinez-Torrecuadrada J.L."/>
            <person name="Maraver A."/>
            <person name="Lombardo E."/>
            <person name="Rodriguez J.F."/>
            <person name="Casal J.I."/>
            <person name="Carrascosa J.L."/>
        </authorList>
    </citation>
    <scope>FUNCTION</scope>
</reference>
<reference key="4">
    <citation type="journal article" date="2007" name="J. Virol.">
        <title>Infectious bursal disease virus capsid assembly and maturation by structural rearrangements of a transient molecular switch.</title>
        <authorList>
            <person name="Luque D."/>
            <person name="Saugar I."/>
            <person name="Rodriguez J.F."/>
            <person name="Verdaguer N."/>
            <person name="Garriga D."/>
            <person name="Martin C.S."/>
            <person name="Velazquez-Muriel J.A."/>
            <person name="Trus B.L."/>
            <person name="Carrascosa J.L."/>
            <person name="Caston J.R."/>
        </authorList>
    </citation>
    <scope>CAPSID ASSEMBLY</scope>
</reference>
<reference key="5">
    <citation type="journal article" date="2009" name="Virology">
        <title>The capsid protein of infectious bursal disease virus contains a functional alpha 4 beta 1 integrin ligand motif.</title>
        <authorList>
            <person name="Delgui L."/>
            <person name="Ona A."/>
            <person name="Gutierrez S."/>
            <person name="Luque D."/>
            <person name="Navarro A."/>
            <person name="Caston J.R."/>
            <person name="Rodriguez J.F."/>
        </authorList>
    </citation>
    <scope>INTERACTION WITH HOST ITGA4/ITGB1</scope>
</reference>
<keyword id="KW-0002">3D-structure</keyword>
<keyword id="KW-0167">Capsid protein</keyword>
<keyword id="KW-1035">Host cytoplasm</keyword>
<keyword id="KW-0378">Hydrolase</keyword>
<keyword id="KW-0479">Metal-binding</keyword>
<keyword id="KW-0645">Protease</keyword>
<keyword id="KW-0720">Serine protease</keyword>
<keyword id="KW-1146">T=13 icosahedral capsid protein</keyword>
<keyword id="KW-0946">Virion</keyword>
<comment type="function">
    <text evidence="4">Capsid protein VP2 self assembles to form an icosahedral capsid with a T=13 symmetry, about 70 nm in diameter, and consisting of 260 VP2 trimers. The capsid encapsulates the genomic dsRNA. VP2 is also involved in attachment and entry into the host cell by interacting with host ITGA4/ITGB1.</text>
</comment>
<comment type="function">
    <text evidence="1">The precursor of VP2 plays an important role in capsid assembly. First, pre-VP2 and VP2 oligomers assemble to form a procapsid. Then, the pre-VP2 intermediates may be processed into VP2 proteins by proteolytic cleavage mediated by VP4 to obtain the mature virion. The final capsid is composed of pentamers and hexamers but VP2 has a natural tendency to assemble into all-pentameric structures. Therefore pre-VP2 may be required to allow formation of the hexameric structures (By similarity).</text>
</comment>
<comment type="function">
    <text evidence="2">Protease VP4 is a serine protease that cleaves the polyprotein into its final products. Pre-VP2 is first partially cleaved, and may be completely processed by VP4 upon capsid maturation.</text>
</comment>
<comment type="function">
    <text evidence="1">Capsid protein VP3 plays a key role in virion assembly by providing a scaffold for the capsid made of VP2. May self-assemble to form a T=4-like icosahedral inner-capsid composed of at least 180 trimers. Plays a role in genomic RNA packaging by recruiting VP1 into the capsid and interacting with the dsRNA genome segments to form a ribonucleoprotein complex. Additionally, the interaction of the VP3 C-terminal tail with VP1 removes the inherent structural blockade of the polymerase active site. Thus, VP3 can also function as a transcriptional activator (By similarity).</text>
</comment>
<comment type="function">
    <text evidence="1">Structural peptide 1 is a small peptide derived from pre-VP2 C-terminus. It destabilizes and perforates cell membranes, suggesting a role during entry (By similarity).</text>
</comment>
<comment type="function">
    <text evidence="1">Structural peptide 2 is a small peptide derived from pVP2 C-terminus. It is not essential for the virus viability, but viral growth is affected when missing (By similarity).</text>
</comment>
<comment type="function">
    <text evidence="1">Structural peptide 3 is a small peptide derived from pVP2 C-terminus. It is not essential for the virus viability, but viral growth is affected when missing (By similarity).</text>
</comment>
<comment type="function">
    <text evidence="1">Structural peptide 4 is a small peptide derived from pVP2 C-terminus. It is essential for the virus viability (By similarity).</text>
</comment>
<comment type="subunit">
    <molecule>Capsid protein VP2</molecule>
    <text evidence="1">Homotrimer. A central divalent metal stabilizes the VP2 trimer (By similarity). Interacts with host ITGA4/ITGB1.</text>
</comment>
<comment type="subunit">
    <molecule>Capsid protein VP3</molecule>
    <text evidence="1">Homodimer. Interacts (via C-terminus) with VP1 in the cytoplasm. Interacts with VP2 (By similarity).</text>
</comment>
<comment type="subcellular location">
    <molecule>Capsid protein VP2</molecule>
    <subcellularLocation>
        <location evidence="5">Virion</location>
    </subcellularLocation>
    <subcellularLocation>
        <location evidence="5">Host cytoplasm</location>
    </subcellularLocation>
</comment>
<comment type="subcellular location">
    <molecule>Capsid protein VP3</molecule>
    <subcellularLocation>
        <location evidence="5">Virion</location>
    </subcellularLocation>
    <subcellularLocation>
        <location evidence="5">Host cytoplasm</location>
    </subcellularLocation>
</comment>
<comment type="subcellular location">
    <molecule>Structural peptide 1</molecule>
    <subcellularLocation>
        <location evidence="5">Virion</location>
    </subcellularLocation>
    <subcellularLocation>
        <location evidence="5">Host cytoplasm</location>
    </subcellularLocation>
</comment>
<comment type="subcellular location">
    <molecule>Structural peptide 2</molecule>
    <subcellularLocation>
        <location evidence="5">Virion</location>
    </subcellularLocation>
    <subcellularLocation>
        <location evidence="5">Host cytoplasm</location>
    </subcellularLocation>
</comment>
<comment type="subcellular location">
    <molecule>Structural peptide 3</molecule>
    <subcellularLocation>
        <location evidence="5">Virion</location>
    </subcellularLocation>
    <subcellularLocation>
        <location evidence="5">Host cytoplasm</location>
    </subcellularLocation>
</comment>
<comment type="subcellular location">
    <molecule>Structural peptide 4</molecule>
    <subcellularLocation>
        <location evidence="5">Virion</location>
    </subcellularLocation>
    <subcellularLocation>
        <location evidence="5">Host cytoplasm</location>
    </subcellularLocation>
</comment>
<comment type="PTM">
    <text evidence="1">Specific enzymatic cleavages yield mature proteins. The capsid assembly seems to be regulated by polyprotein processing. The protease VP4 cleaves itself off the polyprotein, thus releasing pre-VP2 and VP3 within the infected cell. During capsid assembly, the C-terminus of pre-VP2 is further processed by VP4, giving rise to VP2, the external capsid protein and three small peptides that all stay closely associated with the capsid (By similarity).</text>
</comment>
<sequence>MTNLSDQTQQIVPFIRSLLMPTTGPASIPDDTLEKHTLRSETSTYNLTVGDTGSGLIVFFPGFPGSIVGAHYTLQGNGNYKFDQMLLTAQNLPASYNYCRLVSRSLTVRSSTLPGGVYALNGTINAVTFQGSLSELTDVSYNGLMSATANINDKIGNVLVGEGVTVLSLPTSYDLGYVRLGDPIPAIGLDPKMVATCDSSDRPRVYTITAADDYQFSSQYQPGGVTITLFSANIDAITSLSVGGELVFRTSVHGLVLGATIYLIGFDGTTVITRAVAANNGLTTGTDNLMPFNLVIPTNEITQPITSIKLEIVTSKSGGQAGDQMSWSARGSLAVTIHGGNYPGALRPVTLVAYERVATGSVVTVAGVSNFELIPNPELAKNLVTEYGRFDPGAMNYTKLILSERDRLGIKTVWPTREYTDFREYFMEVADLNSPLKIAGAFGFKDIIRAIRRIAVPVVSTLFPPAAPLAHAIGEGVDYLLGDEAQAASGTARAASGKARAASGRIRQLTLAADKGYEVVANLFQVPQNPVVDGILASPGVLRGAHNLDCVLREGATLFPVVITTVEDAMTPKALNSKMFAVIEGVREDLQPPSQRGSFIRTLSGHRVYGYAPDGVLPLETGRDYTVVPIDDVWDDSIMLSKDPIPPIVGNSGNLAIAYMDVFRPKVPIHVAMTGALNACGEIEKVSFRSTKLATAHRLGLRLAGPGAFDVNTGPNWATFIKRFPHNPRDWDRLPYLNLPYLPPNAGRQYHLAMAASEFKETPELESAVRAMEAAANVDPLFQSALSVFMWLEENGIVTDMANFALSDPNAHRMRNFLANAPQAGSKSQRAKYGTAGYGVEARGPTPEEAQREKDTRISKKMETMGIYFATPEWVALNGHRGPSPGQVKYWQNKREIPDPNEDYLDYVHAEKSRLASEEQILRAATSIYGAPGQAEPPQAFIDEVAKVYEINHGRGPNQEQMKDLLLTAMEMKHRNPRRALPKPKPKPNAPTQRPPGRLGRWIRTVSDEDLE</sequence>
<accession>Q9WI42</accession>
<organismHost>
    <name type="scientific">Gallus gallus</name>
    <name type="common">Chicken</name>
    <dbReference type="NCBI Taxonomy" id="9031"/>
</organismHost>
<organismHost>
    <name type="scientific">Meleagris gallopavo</name>
    <name type="common">Wild turkey</name>
    <dbReference type="NCBI Taxonomy" id="9103"/>
</organismHost>